<protein>
    <recommendedName>
        <fullName>Inclusion membrane protein A</fullName>
    </recommendedName>
</protein>
<proteinExistence type="evidence at protein level"/>
<gene>
    <name type="primary">incA</name>
    <name type="ordered locus">CTL0374</name>
</gene>
<accession>A0A0H3MD02</accession>
<accession>O69196</accession>
<accession>Q9AMA4</accession>
<accession>Q9AMA5</accession>
<accession>Q9AMA6</accession>
<accession>Q9AMB2</accession>
<organism>
    <name type="scientific">Chlamydia trachomatis serovar L2 (strain ATCC VR-902B / DSM 19102 / 434/Bu)</name>
    <dbReference type="NCBI Taxonomy" id="471472"/>
    <lineage>
        <taxon>Bacteria</taxon>
        <taxon>Pseudomonadati</taxon>
        <taxon>Chlamydiota</taxon>
        <taxon>Chlamydiia</taxon>
        <taxon>Chlamydiales</taxon>
        <taxon>Chlamydiaceae</taxon>
        <taxon>Chlamydia/Chlamydophila group</taxon>
        <taxon>Chlamydia</taxon>
    </lineage>
</organism>
<evidence type="ECO:0000255" key="1"/>
<evidence type="ECO:0000256" key="2">
    <source>
        <dbReference type="SAM" id="MobiDB-lite"/>
    </source>
</evidence>
<evidence type="ECO:0000269" key="3">
    <source>
    </source>
</evidence>
<evidence type="ECO:0000269" key="4">
    <source>
    </source>
</evidence>
<evidence type="ECO:0000269" key="5">
    <source>
    </source>
</evidence>
<evidence type="ECO:0000269" key="6">
    <source>
    </source>
</evidence>
<evidence type="ECO:0000269" key="7">
    <source>
    </source>
</evidence>
<evidence type="ECO:0000305" key="8"/>
<evidence type="ECO:0000305" key="9">
    <source>
    </source>
</evidence>
<evidence type="ECO:0000305" key="10">
    <source>
    </source>
</evidence>
<evidence type="ECO:0000305" key="11">
    <source>
    </source>
</evidence>
<evidence type="ECO:0000305" key="12">
    <source>
    </source>
</evidence>
<name>INCA_CHLT2</name>
<sequence>MTTPTLIVTPPSPPAPSYSANRVPQPSLMDKIKKIAAIASLILIGTIGFLALLGHLVGFLIAPQITIVLLALFITSLAGNALYLQKTANLHLYQDLQREVGSLKEINFMLSVLQKEFLHLSKEFATTSKDLSAVSQDFYSCLQGFRDNYKGFESLLDEYKNSTEEMRKLFSQEIIADLKGSVASLREEIRFLTPLAEEVRRLAHNQESLTAAIEELKTIRDSLRDEIGQLSQLSKTLTSQIALQRKESSDLCSQIRETLSSPRKSASPSTKSS</sequence>
<feature type="chain" id="PRO_0000446189" description="Inclusion membrane protein A">
    <location>
        <begin position="1"/>
        <end position="273"/>
    </location>
</feature>
<feature type="transmembrane region" description="Helical" evidence="1">
    <location>
        <begin position="41"/>
        <end position="61"/>
    </location>
</feature>
<feature type="transmembrane region" description="Helical" evidence="1">
    <location>
        <begin position="64"/>
        <end position="84"/>
    </location>
</feature>
<feature type="region of interest" description="Disordered" evidence="2">
    <location>
        <begin position="1"/>
        <end position="20"/>
    </location>
</feature>
<feature type="region of interest" description="Disordered" evidence="2">
    <location>
        <begin position="253"/>
        <end position="273"/>
    </location>
</feature>
<feature type="coiled-coil region" evidence="1">
    <location>
        <begin position="206"/>
        <end position="233"/>
    </location>
</feature>
<feature type="sequence conflict" description="In Ref. 1; AAC82641." evidence="8" ref="1">
    <original>T</original>
    <variation>I</variation>
    <location>
        <position position="9"/>
    </location>
</feature>
<comment type="function">
    <text evidence="4">Chlamydia replicate within a host intracellular vacuole, termed an inclusion, which is formed by fusion of many smaller inclusion bodies. IncA may be involved in the homotypic fusion of inclusions; injection of anti-IncA antibodies prevents homotypic fusion, but not fusion with exocytic vesicles.</text>
</comment>
<comment type="subunit">
    <text evidence="4 6">May form homodimers via its C-terminus (PubMed:11207546). Forms homodimers, and probably higher-order oligomers (PubMed:15316015).</text>
</comment>
<comment type="subcellular location">
    <subcellularLocation>
        <location evidence="9">Secreted</location>
    </subcellularLocation>
    <subcellularLocation>
        <location evidence="3 7 10">Host vacuole</location>
        <location evidence="3 7 10">Host pathogen-containing vacuole</location>
        <location evidence="3 7 10">Host pathogen-containing vacuole membrane</location>
        <topology evidence="1">Multi-pass membrane protein</topology>
    </subcellularLocation>
    <text evidence="3 4 5 7 10 11">Secreted, probably by a type III secretion system (Probable). Secretion into the host pathogen-containing vacuole membrane (inclusion body) is considerably decreased when infected HeLa cells are grown at 32 degrees Celsius (PubMed:12065525). Localized in the inclusion membrane (Probable) (PubMed:11207546, PubMed:9826388). Inclusion membrane staining is punctate (PubMed:10447885). In the inclusion, the C-terminus faces the host cytosol (PubMed:11207546).</text>
</comment>
<comment type="developmental stage">
    <text evidence="3">Present in reticulate bodies (RB) and much less in elementary bodies (EB) (at protein level).</text>
</comment>
<comment type="induction">
    <text evidence="3">Detected 12 hours post-infection of host HeLa cells.</text>
</comment>
<comment type="domain">
    <text evidence="12">IncA proteins share the same general organization: a short N-terminal domain, a large bilobed hydrophobic domain, and a C-terminal cytoplasmic domain.</text>
</comment>
<comment type="similarity">
    <text evidence="8">Belongs to the IncA family.</text>
</comment>
<comment type="sequence caution" evidence="8">
    <conflict type="erroneous initiation">
        <sequence resource="EMBL-CDS" id="CAP03814"/>
    </conflict>
    <text>Truncated N-terminus.</text>
</comment>
<keyword id="KW-0175">Coiled coil</keyword>
<keyword id="KW-1043">Host membrane</keyword>
<keyword id="KW-0472">Membrane</keyword>
<keyword id="KW-0964">Secreted</keyword>
<keyword id="KW-0812">Transmembrane</keyword>
<keyword id="KW-1133">Transmembrane helix</keyword>
<dbReference type="EMBL" id="AF067958">
    <property type="protein sequence ID" value="AAC82641.1"/>
    <property type="molecule type" value="Genomic_DNA"/>
</dbReference>
<dbReference type="EMBL" id="AF327009">
    <property type="protein sequence ID" value="AAG61106.1"/>
    <property type="molecule type" value="Genomic_DNA"/>
</dbReference>
<dbReference type="EMBL" id="AM884176">
    <property type="protein sequence ID" value="CAP03814.1"/>
    <property type="status" value="ALT_INIT"/>
    <property type="molecule type" value="Genomic_DNA"/>
</dbReference>
<dbReference type="RefSeq" id="WP_009873574.1">
    <property type="nucleotide sequence ID" value="NC_010287.1"/>
</dbReference>
<dbReference type="RefSeq" id="YP_001654458.1">
    <property type="nucleotide sequence ID" value="NC_010287.1"/>
</dbReference>
<dbReference type="SMR" id="A0A0H3MD02"/>
<dbReference type="KEGG" id="ctb:CTL0374"/>
<dbReference type="PATRIC" id="fig|471472.4.peg.406"/>
<dbReference type="HOGENOM" id="CLU_067042_0_0_0"/>
<dbReference type="Proteomes" id="UP001154402">
    <property type="component" value="Chromosome"/>
</dbReference>
<dbReference type="GO" id="GO:0005576">
    <property type="term" value="C:extracellular region"/>
    <property type="evidence" value="ECO:0007669"/>
    <property type="project" value="UniProtKB-SubCell"/>
</dbReference>
<dbReference type="GO" id="GO:0033644">
    <property type="term" value="C:host cell membrane"/>
    <property type="evidence" value="ECO:0007669"/>
    <property type="project" value="UniProtKB-KW"/>
</dbReference>
<dbReference type="GO" id="GO:0140221">
    <property type="term" value="C:pathogen-containing vacuole membrane"/>
    <property type="evidence" value="ECO:0000314"/>
    <property type="project" value="UniProtKB"/>
</dbReference>
<dbReference type="Gene3D" id="1.10.287.1490">
    <property type="match status" value="1"/>
</dbReference>
<reference key="1">
    <citation type="journal article" date="1998" name="Infect. Immun.">
        <title>Chlamydia trachomatis IncA is localized to the inclusion membrane and is recognized by antisera from infected humans and primates.</title>
        <authorList>
            <person name="Bannantine J.P."/>
            <person name="Stamm W.E."/>
            <person name="Suchland R.J."/>
            <person name="Rockey D.D."/>
        </authorList>
    </citation>
    <scope>NUCLEOTIDE SEQUENCE [GENOMIC DNA]</scope>
    <scope>SUBCELLULAR LOCATION</scope>
    <source>
        <strain>ATCC VR-902B / DSM 19102 / 434/Bu</strain>
    </source>
</reference>
<reference key="2">
    <citation type="journal article" date="2001" name="Infect. Immun.">
        <title>Normal IncA expression and fusogenicity of inclusions in Chlamydia trachomatis isolates with the incA I47T mutation.</title>
        <authorList>
            <person name="Pannekoek Y."/>
            <person name="van der Ende A."/>
            <person name="Eijk P.P."/>
            <person name="van Marle J."/>
            <person name="de Witte M.A."/>
            <person name="Ossewaarde J.M."/>
            <person name="van den Brule A.J.C."/>
            <person name="Morre S.A."/>
            <person name="Dankert J."/>
        </authorList>
    </citation>
    <scope>NUCLEOTIDE SEQUENCE [GENOMIC DNA]</scope>
    <scope>SUBCELLULAR LOCATION</scope>
    <source>
        <strain>ATCC VR-902B / DSM 19102 / 434/Bu</strain>
    </source>
</reference>
<reference key="3">
    <citation type="journal article" date="2008" name="Genome Res.">
        <title>Chlamydia trachomatis: genome sequence analysis of lymphogranuloma venereum isolates.</title>
        <authorList>
            <person name="Thomson N.R."/>
            <person name="Holden M.T.G."/>
            <person name="Carder C."/>
            <person name="Lennard N."/>
            <person name="Lockey S.J."/>
            <person name="Marsh P."/>
            <person name="Skipp P."/>
            <person name="O'Connor C.D."/>
            <person name="Goodhead I."/>
            <person name="Norbertzcak H."/>
            <person name="Harris B."/>
            <person name="Ormond D."/>
            <person name="Rance R."/>
            <person name="Quail M.A."/>
            <person name="Parkhill J."/>
            <person name="Stephens R.S."/>
            <person name="Clarke I.N."/>
        </authorList>
    </citation>
    <scope>NUCLEOTIDE SEQUENCE [LARGE SCALE GENOMIC DNA]</scope>
    <source>
        <strain>ATCC VR-902B / DSM 19102 / 434/Bu</strain>
    </source>
</reference>
<reference key="4">
    <citation type="journal article" date="1999" name="Cell. Microbiol.">
        <title>The Chlamydia trachomatis IncA protein is required for homotypic vesicle fusion.</title>
        <authorList>
            <person name="Hackstadt T."/>
            <person name="Scidmore-Carlson M.A."/>
            <person name="Shaw E.I."/>
            <person name="Fischer E.R."/>
        </authorList>
    </citation>
    <scope>FUNCTION</scope>
    <scope>SUBUNIT</scope>
    <scope>SUBCELLULAR LOCATION</scope>
    <scope>TOPOLOGY</scope>
    <source>
        <strain>ATCC VR-902B / DSM 19102 / 434/Bu</strain>
    </source>
</reference>
<reference key="5">
    <citation type="journal article" date="1999" name="Mol. Microbiol.">
        <title>Identification and characterization of a Chlamydia trachomatis early operon encoding four novel inclusion membrane proteins.</title>
        <authorList>
            <person name="Scidmore-Carlson M.A."/>
            <person name="Shaw E.I."/>
            <person name="Dooley C.A."/>
            <person name="Fischer E.R."/>
            <person name="Hackstadt T."/>
        </authorList>
    </citation>
    <scope>DEVELOPMENTAL STAGE</scope>
    <scope>INDUCTION</scope>
    <source>
        <strain>ATCC VR-902B / DSM 19102 / 434/Bu</strain>
    </source>
</reference>
<reference key="6">
    <citation type="journal article" date="2002" name="Infect. Immun.">
        <title>Inhibition of fusion of Chlamydia trachomatis inclusions at 32 degrees C correlates with restricted export of IncA.</title>
        <authorList>
            <person name="Fields K.A."/>
            <person name="Fischer E.R."/>
            <person name="Hackstadt T."/>
        </authorList>
    </citation>
    <scope>INHIBITION OF SECRETION</scope>
    <source>
        <strain>ATCC VR-902B / DSM 19102 / 434/Bu</strain>
    </source>
</reference>
<reference key="7">
    <citation type="journal article" date="2003" name="Mol. Microbiol.">
        <title>Chlamydia trachomatis type III secretion: evidence for a functional apparatus during early-cycle development.</title>
        <authorList>
            <person name="Fields K.A."/>
            <person name="Mead D.J."/>
            <person name="Dooley C.A."/>
            <person name="Hackstadt T."/>
        </authorList>
    </citation>
    <scope>PROBABLE EXPORT BY A TYPE III SECRETION SYSTEM</scope>
    <source>
        <strain>L2</strain>
    </source>
</reference>
<reference key="8">
    <citation type="journal article" date="2004" name="J. Biol. Chem.">
        <title>Conservation of the biochemical properties of IncA from Chlamydia trachomatis and Chlamydia caviae: oligomerization of IncA mediates interaction between facing membranes.</title>
        <authorList>
            <person name="Delevoye C."/>
            <person name="Nilges M."/>
            <person name="Dautry-Varsat A."/>
            <person name="Subtil A."/>
        </authorList>
    </citation>
    <scope>SUBUNIT</scope>
    <scope>OLIGOMERIZATION</scope>
    <scope>DOMAIN</scope>
    <source>
        <strain>ATCC VR-902B / DSM 19102 / 434/Bu</strain>
    </source>
</reference>